<comment type="function">
    <text evidence="1 2">Required for the timely initiation of chromosomal replication via direct interactions with the DnaA initiator protein.</text>
</comment>
<comment type="subunit">
    <text evidence="1 2">Homotetramer; dimer of dimers. May be in a rapid association-dissociation equilibrium between homodimers and homotetramers. Formation of homotetramers is required for stimulation of replication. Interacts with DnaA.</text>
</comment>
<comment type="interaction">
    <interactant intactId="EBI-1125806">
        <id>P66817</id>
    </interactant>
    <interactant intactId="EBI-1125806">
        <id>P66817</id>
        <label>diaA</label>
    </interactant>
    <organismsDiffer>false</organismsDiffer>
    <experiments>5</experiments>
</comment>
<comment type="interaction">
    <interactant intactId="EBI-1125806">
        <id>P66817</id>
    </interactant>
    <interactant intactId="EBI-548951">
        <id>P03004</id>
        <label>dnaA</label>
    </interactant>
    <organismsDiffer>false</organismsDiffer>
    <experiments>5</experiments>
</comment>
<comment type="similarity">
    <text evidence="3">Belongs to the SIS family. DiaA subfamily.</text>
</comment>
<name>DIAA_ECOLI</name>
<evidence type="ECO:0000269" key="1">
    <source>
    </source>
</evidence>
<evidence type="ECO:0000269" key="2">
    <source>
    </source>
</evidence>
<evidence type="ECO:0000305" key="3"/>
<evidence type="ECO:0007829" key="4">
    <source>
        <dbReference type="PDB" id="2YVA"/>
    </source>
</evidence>
<organism>
    <name type="scientific">Escherichia coli (strain K12)</name>
    <dbReference type="NCBI Taxonomy" id="83333"/>
    <lineage>
        <taxon>Bacteria</taxon>
        <taxon>Pseudomonadati</taxon>
        <taxon>Pseudomonadota</taxon>
        <taxon>Gammaproteobacteria</taxon>
        <taxon>Enterobacterales</taxon>
        <taxon>Enterobacteriaceae</taxon>
        <taxon>Escherichia</taxon>
    </lineage>
</organism>
<feature type="chain" id="PRO_0000136555" description="DnaA initiator-associating protein DiaA">
    <location>
        <begin position="1"/>
        <end position="196"/>
    </location>
</feature>
<feature type="domain" description="SIS">
    <location>
        <begin position="34"/>
        <end position="196"/>
    </location>
</feature>
<feature type="region of interest" description="Important for interaction with DnaA">
    <location>
        <begin position="190"/>
        <end position="191"/>
    </location>
</feature>
<feature type="mutagenesis site" description="Abolishes stimulation of DnaA-dependent DNA synthesis." evidence="2">
    <original>S</original>
    <variation>F</variation>
    <location>
        <position position="52"/>
    </location>
</feature>
<feature type="mutagenesis site" description="Reduces affinity for DnaA. Strongly reduces DnaA-dependent DNA synthesis." evidence="2">
    <original>R</original>
    <variation>Q</variation>
    <location>
        <position position="71"/>
    </location>
</feature>
<feature type="mutagenesis site" description="Strongly reduces affinity for DnaA. Reduces DnaA-dependent DNA synthesis." evidence="2">
    <original>P</original>
    <variation>A</variation>
    <variation>S</variation>
    <location>
        <position position="72"/>
    </location>
</feature>
<feature type="mutagenesis site" description="Abolishes association of homodimers into homotetramers. Reduces affinity for DnaA. Strongly reduces DnaA-dependent DNA synthesis." evidence="2">
    <original>N</original>
    <variation>D</variation>
    <location>
        <position position="83"/>
    </location>
</feature>
<feature type="mutagenesis site" description="Abolishes association of homodimers into homotetramers. Strongly reduces DnaA-dependent DNA synthesis." evidence="2">
    <original>K</original>
    <variation>E</variation>
    <location>
        <position position="101"/>
    </location>
</feature>
<feature type="mutagenesis site" description="Abolishes interaction with DnaA. Strongly reduces DnaA-dependent DNA synthesis." evidence="2">
    <original>L</original>
    <variation>A</variation>
    <variation>P</variation>
    <location>
        <position position="190"/>
    </location>
</feature>
<feature type="mutagenesis site" description="Abolishes interaction with DnaA. Strongly reduces DnaA-dependent DNA synthesis." evidence="2">
    <original>F</original>
    <variation>L</variation>
    <variation>S</variation>
    <location>
        <position position="191"/>
    </location>
</feature>
<feature type="helix" evidence="4">
    <location>
        <begin position="2"/>
        <end position="22"/>
    </location>
</feature>
<feature type="helix" evidence="4">
    <location>
        <begin position="24"/>
        <end position="39"/>
    </location>
</feature>
<feature type="strand" evidence="4">
    <location>
        <begin position="44"/>
        <end position="49"/>
    </location>
</feature>
<feature type="helix" evidence="4">
    <location>
        <begin position="51"/>
        <end position="64"/>
    </location>
</feature>
<feature type="strand" evidence="4">
    <location>
        <begin position="67"/>
        <end position="69"/>
    </location>
</feature>
<feature type="strand" evidence="4">
    <location>
        <begin position="76"/>
        <end position="80"/>
    </location>
</feature>
<feature type="helix" evidence="4">
    <location>
        <begin position="83"/>
        <end position="89"/>
    </location>
</feature>
<feature type="helix" evidence="4">
    <location>
        <begin position="95"/>
        <end position="97"/>
    </location>
</feature>
<feature type="helix" evidence="4">
    <location>
        <begin position="98"/>
        <end position="106"/>
    </location>
</feature>
<feature type="strand" evidence="4">
    <location>
        <begin position="112"/>
        <end position="116"/>
    </location>
</feature>
<feature type="strand" evidence="4">
    <location>
        <begin position="118"/>
        <end position="120"/>
    </location>
</feature>
<feature type="helix" evidence="4">
    <location>
        <begin position="123"/>
        <end position="134"/>
    </location>
</feature>
<feature type="strand" evidence="4">
    <location>
        <begin position="138"/>
        <end position="143"/>
    </location>
</feature>
<feature type="helix" evidence="4">
    <location>
        <begin position="148"/>
        <end position="151"/>
    </location>
</feature>
<feature type="strand" evidence="4">
    <location>
        <begin position="158"/>
        <end position="162"/>
    </location>
</feature>
<feature type="helix" evidence="4">
    <location>
        <begin position="168"/>
        <end position="190"/>
    </location>
</feature>
<reference key="1">
    <citation type="journal article" date="1997" name="Science">
        <title>The complete genome sequence of Escherichia coli K-12.</title>
        <authorList>
            <person name="Blattner F.R."/>
            <person name="Plunkett G. III"/>
            <person name="Bloch C.A."/>
            <person name="Perna N.T."/>
            <person name="Burland V."/>
            <person name="Riley M."/>
            <person name="Collado-Vides J."/>
            <person name="Glasner J.D."/>
            <person name="Rode C.K."/>
            <person name="Mayhew G.F."/>
            <person name="Gregor J."/>
            <person name="Davis N.W."/>
            <person name="Kirkpatrick H.A."/>
            <person name="Goeden M.A."/>
            <person name="Rose D.J."/>
            <person name="Mau B."/>
            <person name="Shao Y."/>
        </authorList>
    </citation>
    <scope>NUCLEOTIDE SEQUENCE [LARGE SCALE GENOMIC DNA]</scope>
    <source>
        <strain>K12 / MG1655 / ATCC 47076</strain>
    </source>
</reference>
<reference key="2">
    <citation type="journal article" date="2006" name="Mol. Syst. Biol.">
        <title>Highly accurate genome sequences of Escherichia coli K-12 strains MG1655 and W3110.</title>
        <authorList>
            <person name="Hayashi K."/>
            <person name="Morooka N."/>
            <person name="Yamamoto Y."/>
            <person name="Fujita K."/>
            <person name="Isono K."/>
            <person name="Choi S."/>
            <person name="Ohtsubo E."/>
            <person name="Baba T."/>
            <person name="Wanner B.L."/>
            <person name="Mori H."/>
            <person name="Horiuchi T."/>
        </authorList>
    </citation>
    <scope>NUCLEOTIDE SEQUENCE [LARGE SCALE GENOMIC DNA]</scope>
    <source>
        <strain>K12 / W3110 / ATCC 27325 / DSM 5911</strain>
    </source>
</reference>
<reference key="3">
    <citation type="journal article" date="2004" name="J. Biol. Chem.">
        <title>DiaA, a novel DnaA-binding protein, ensures the timely initiation of Escherichia coli chromosome replication.</title>
        <authorList>
            <person name="Ishida T."/>
            <person name="Akimitsu N."/>
            <person name="Kashioka T."/>
            <person name="Hatano M."/>
            <person name="Kubota T."/>
            <person name="Ogata Y."/>
            <person name="Sekimizu K."/>
            <person name="Katayama T."/>
        </authorList>
    </citation>
    <scope>PROTEIN SEQUENCE OF 1-7</scope>
    <scope>FUNCTION</scope>
    <scope>INTERACTION WITH DNAA</scope>
    <scope>SUBUNIT</scope>
    <source>
        <strain>K12</strain>
    </source>
</reference>
<reference key="4">
    <citation type="journal article" date="2007" name="Genes Dev.">
        <title>The interaction of DiaA and DnaA regulates the replication cycle in E. coli by directly promoting ATP DnaA-specific initiation complexes.</title>
        <authorList>
            <person name="Keyamura K."/>
            <person name="Fujikawa N."/>
            <person name="Ishida T."/>
            <person name="Ozaki S."/>
            <person name="Su'etsugu M."/>
            <person name="Fujimitsu K."/>
            <person name="Kagawa W."/>
            <person name="Yokoyama S."/>
            <person name="Kurumizaka H."/>
            <person name="Katayama T."/>
        </authorList>
    </citation>
    <scope>X-RAY CRYSTALLOGRAPHY (1.85 ANGSTROMS)</scope>
    <scope>FUNCTION</scope>
    <scope>INTERACTION WITH DNAA</scope>
    <scope>SUBUNIT</scope>
    <scope>MUTAGENESIS OF SER-52; ARG-71; PRO-72; ASN-83; LYS-101; LEU-190 AND PHE-191</scope>
</reference>
<dbReference type="EMBL" id="U18997">
    <property type="protein sequence ID" value="AAA57952.1"/>
    <property type="molecule type" value="Genomic_DNA"/>
</dbReference>
<dbReference type="EMBL" id="U00096">
    <property type="protein sequence ID" value="AAC76183.1"/>
    <property type="molecule type" value="Genomic_DNA"/>
</dbReference>
<dbReference type="EMBL" id="AP009048">
    <property type="protein sequence ID" value="BAE77195.1"/>
    <property type="molecule type" value="Genomic_DNA"/>
</dbReference>
<dbReference type="PIR" id="A65105">
    <property type="entry name" value="A65105"/>
</dbReference>
<dbReference type="RefSeq" id="NP_417618.1">
    <property type="nucleotide sequence ID" value="NC_000913.3"/>
</dbReference>
<dbReference type="RefSeq" id="WP_001158034.1">
    <property type="nucleotide sequence ID" value="NZ_STEB01000012.1"/>
</dbReference>
<dbReference type="PDB" id="2YVA">
    <property type="method" value="X-ray"/>
    <property type="resolution" value="1.85 A"/>
    <property type="chains" value="A/B=1-196"/>
</dbReference>
<dbReference type="PDB" id="4U6N">
    <property type="method" value="X-ray"/>
    <property type="resolution" value="1.91 A"/>
    <property type="chains" value="A=2-196"/>
</dbReference>
<dbReference type="PDBsum" id="2YVA"/>
<dbReference type="PDBsum" id="4U6N"/>
<dbReference type="SMR" id="P66817"/>
<dbReference type="BioGRID" id="4261991">
    <property type="interactions" value="159"/>
</dbReference>
<dbReference type="ComplexPortal" id="CPX-1963">
    <property type="entry name" value="dnaA-diaA complex"/>
</dbReference>
<dbReference type="DIP" id="DIP-35981N"/>
<dbReference type="FunCoup" id="P66817">
    <property type="interactions" value="97"/>
</dbReference>
<dbReference type="IntAct" id="P66817">
    <property type="interactions" value="10"/>
</dbReference>
<dbReference type="STRING" id="511145.b3149"/>
<dbReference type="jPOST" id="P66817"/>
<dbReference type="PaxDb" id="511145-b3149"/>
<dbReference type="EnsemblBacteria" id="AAC76183">
    <property type="protein sequence ID" value="AAC76183"/>
    <property type="gene ID" value="b3149"/>
</dbReference>
<dbReference type="GeneID" id="93778835"/>
<dbReference type="GeneID" id="947661"/>
<dbReference type="KEGG" id="ecj:JW3118"/>
<dbReference type="KEGG" id="eco:b3149"/>
<dbReference type="KEGG" id="ecoc:C3026_17155"/>
<dbReference type="PATRIC" id="fig|1411691.4.peg.3581"/>
<dbReference type="EchoBASE" id="EB2633"/>
<dbReference type="eggNOG" id="COG0279">
    <property type="taxonomic scope" value="Bacteria"/>
</dbReference>
<dbReference type="HOGENOM" id="CLU_080999_3_1_6"/>
<dbReference type="InParanoid" id="P66817"/>
<dbReference type="OMA" id="EMHILMI"/>
<dbReference type="OrthoDB" id="9810929at2"/>
<dbReference type="PhylomeDB" id="P66817"/>
<dbReference type="BioCyc" id="EcoCyc:YRAO-MONOMER"/>
<dbReference type="EvolutionaryTrace" id="P66817"/>
<dbReference type="PRO" id="PR:P66817"/>
<dbReference type="Proteomes" id="UP000000625">
    <property type="component" value="Chromosome"/>
</dbReference>
<dbReference type="GO" id="GO:1990102">
    <property type="term" value="C:DnaA-DiaA complex"/>
    <property type="evidence" value="ECO:0000353"/>
    <property type="project" value="ComplexPortal"/>
</dbReference>
<dbReference type="GO" id="GO:0097367">
    <property type="term" value="F:carbohydrate derivative binding"/>
    <property type="evidence" value="ECO:0007669"/>
    <property type="project" value="InterPro"/>
</dbReference>
<dbReference type="GO" id="GO:0042802">
    <property type="term" value="F:identical protein binding"/>
    <property type="evidence" value="ECO:0000353"/>
    <property type="project" value="IntAct"/>
</dbReference>
<dbReference type="GO" id="GO:0042803">
    <property type="term" value="F:protein homodimerization activity"/>
    <property type="evidence" value="ECO:0000314"/>
    <property type="project" value="EcoCyc"/>
</dbReference>
<dbReference type="GO" id="GO:1901135">
    <property type="term" value="P:carbohydrate derivative metabolic process"/>
    <property type="evidence" value="ECO:0007669"/>
    <property type="project" value="InterPro"/>
</dbReference>
<dbReference type="GO" id="GO:0006260">
    <property type="term" value="P:DNA replication"/>
    <property type="evidence" value="ECO:0007669"/>
    <property type="project" value="UniProtKB-UniRule"/>
</dbReference>
<dbReference type="GO" id="GO:0032298">
    <property type="term" value="P:positive regulation of DNA-templated DNA replication initiation"/>
    <property type="evidence" value="ECO:0000314"/>
    <property type="project" value="EcoCyc"/>
</dbReference>
<dbReference type="CDD" id="cd05006">
    <property type="entry name" value="SIS_GmhA"/>
    <property type="match status" value="1"/>
</dbReference>
<dbReference type="FunFam" id="3.40.50.10490:FF:000006">
    <property type="entry name" value="DnaA initiator-associating protein DiaA"/>
    <property type="match status" value="1"/>
</dbReference>
<dbReference type="Gene3D" id="3.40.50.10490">
    <property type="entry name" value="Glucose-6-phosphate isomerase like protein, domain 1"/>
    <property type="match status" value="1"/>
</dbReference>
<dbReference type="HAMAP" id="MF_01157">
    <property type="entry name" value="SIS_DiaA"/>
    <property type="match status" value="1"/>
</dbReference>
<dbReference type="InterPro" id="IPR023070">
    <property type="entry name" value="DiaA"/>
</dbReference>
<dbReference type="InterPro" id="IPR035461">
    <property type="entry name" value="GmhA/DiaA"/>
</dbReference>
<dbReference type="InterPro" id="IPR001347">
    <property type="entry name" value="SIS_dom"/>
</dbReference>
<dbReference type="InterPro" id="IPR046348">
    <property type="entry name" value="SIS_dom_sf"/>
</dbReference>
<dbReference type="InterPro" id="IPR050099">
    <property type="entry name" value="SIS_GmhA/DiaA_subfam"/>
</dbReference>
<dbReference type="NCBIfam" id="NF008138">
    <property type="entry name" value="PRK10886.1"/>
    <property type="match status" value="1"/>
</dbReference>
<dbReference type="NCBIfam" id="NF010546">
    <property type="entry name" value="PRK13936.1"/>
    <property type="match status" value="1"/>
</dbReference>
<dbReference type="PANTHER" id="PTHR30390:SF6">
    <property type="entry name" value="DNAA INITIATOR-ASSOCIATING PROTEIN DIAA"/>
    <property type="match status" value="1"/>
</dbReference>
<dbReference type="PANTHER" id="PTHR30390">
    <property type="entry name" value="SEDOHEPTULOSE 7-PHOSPHATE ISOMERASE / DNAA INITIATOR-ASSOCIATING FACTOR FOR REPLICATION INITIATION"/>
    <property type="match status" value="1"/>
</dbReference>
<dbReference type="Pfam" id="PF13580">
    <property type="entry name" value="SIS_2"/>
    <property type="match status" value="1"/>
</dbReference>
<dbReference type="SUPFAM" id="SSF53697">
    <property type="entry name" value="SIS domain"/>
    <property type="match status" value="1"/>
</dbReference>
<dbReference type="PROSITE" id="PS51464">
    <property type="entry name" value="SIS"/>
    <property type="match status" value="1"/>
</dbReference>
<keyword id="KW-0002">3D-structure</keyword>
<keyword id="KW-0903">Direct protein sequencing</keyword>
<keyword id="KW-0235">DNA replication</keyword>
<keyword id="KW-1185">Reference proteome</keyword>
<proteinExistence type="evidence at protein level"/>
<accession>P66817</accession>
<accession>P45466</accession>
<accession>Q2M961</accession>
<sequence length="196" mass="21106">MQERIKACFTESIQTQIAAAEALPDAISRAAMTLVQSLLNGNKILCCGNGTSAANAQHFAASMINRFETERPSLPAIALNTDNVVLTAIANDRLHDEVYAKQVRALGHAGDVLLAISTRGNSRDIVKAVEAAVTRDMTIVALTGYDGGELAGLLGPQDVEIRIPSHRSARIQEMHMLTVNCLCDLIDNTLFPHQDD</sequence>
<gene>
    <name type="primary">diaA</name>
    <name type="synonym">yraO</name>
    <name type="ordered locus">b3149</name>
    <name type="ordered locus">JW3118</name>
</gene>
<protein>
    <recommendedName>
        <fullName>DnaA initiator-associating protein DiaA</fullName>
    </recommendedName>
</protein>